<dbReference type="EMBL" id="DS480390">
    <property type="protein sequence ID" value="EDO18343.1"/>
    <property type="molecule type" value="Genomic_DNA"/>
</dbReference>
<dbReference type="RefSeq" id="XP_001646201.1">
    <property type="nucleotide sequence ID" value="XM_001646151.1"/>
</dbReference>
<dbReference type="SMR" id="A7TH62"/>
<dbReference type="FunCoup" id="A7TH62">
    <property type="interactions" value="842"/>
</dbReference>
<dbReference type="STRING" id="436907.A7TH62"/>
<dbReference type="GeneID" id="5546625"/>
<dbReference type="KEGG" id="vpo:Kpol_1013p14"/>
<dbReference type="eggNOG" id="KOG2749">
    <property type="taxonomic scope" value="Eukaryota"/>
</dbReference>
<dbReference type="HOGENOM" id="CLU_018195_3_1_1"/>
<dbReference type="InParanoid" id="A7TH62"/>
<dbReference type="OMA" id="VQYVNCH"/>
<dbReference type="OrthoDB" id="258143at2759"/>
<dbReference type="PhylomeDB" id="A7TH62"/>
<dbReference type="Proteomes" id="UP000000267">
    <property type="component" value="Unassembled WGS sequence"/>
</dbReference>
<dbReference type="GO" id="GO:0005849">
    <property type="term" value="C:mRNA cleavage factor complex"/>
    <property type="evidence" value="ECO:0007669"/>
    <property type="project" value="UniProtKB-UniRule"/>
</dbReference>
<dbReference type="GO" id="GO:0005524">
    <property type="term" value="F:ATP binding"/>
    <property type="evidence" value="ECO:0007669"/>
    <property type="project" value="UniProtKB-UniRule"/>
</dbReference>
<dbReference type="GO" id="GO:0051731">
    <property type="term" value="F:polynucleotide 5'-hydroxyl-kinase activity"/>
    <property type="evidence" value="ECO:0007669"/>
    <property type="project" value="InterPro"/>
</dbReference>
<dbReference type="GO" id="GO:0031124">
    <property type="term" value="P:mRNA 3'-end processing"/>
    <property type="evidence" value="ECO:0007669"/>
    <property type="project" value="UniProtKB-UniRule"/>
</dbReference>
<dbReference type="GO" id="GO:0006388">
    <property type="term" value="P:tRNA splicing, via endonucleolytic cleavage and ligation"/>
    <property type="evidence" value="ECO:0007669"/>
    <property type="project" value="TreeGrafter"/>
</dbReference>
<dbReference type="Gene3D" id="2.60.120.1030">
    <property type="entry name" value="Clp1, DNA binding domain"/>
    <property type="match status" value="1"/>
</dbReference>
<dbReference type="Gene3D" id="3.40.50.300">
    <property type="entry name" value="P-loop containing nucleotide triphosphate hydrolases"/>
    <property type="match status" value="1"/>
</dbReference>
<dbReference type="Gene3D" id="2.40.30.330">
    <property type="entry name" value="Pre-mRNA cleavage complex subunit Clp1, C-terminal domain"/>
    <property type="match status" value="1"/>
</dbReference>
<dbReference type="HAMAP" id="MF_03035">
    <property type="entry name" value="Clp1"/>
    <property type="match status" value="1"/>
</dbReference>
<dbReference type="InterPro" id="IPR028606">
    <property type="entry name" value="Clp1"/>
</dbReference>
<dbReference type="InterPro" id="IPR045116">
    <property type="entry name" value="Clp1/Grc3"/>
</dbReference>
<dbReference type="InterPro" id="IPR010655">
    <property type="entry name" value="Clp1_C"/>
</dbReference>
<dbReference type="InterPro" id="IPR038238">
    <property type="entry name" value="Clp1_C_sf"/>
</dbReference>
<dbReference type="InterPro" id="IPR032324">
    <property type="entry name" value="Clp1_N"/>
</dbReference>
<dbReference type="InterPro" id="IPR038239">
    <property type="entry name" value="Clp1_N_sf"/>
</dbReference>
<dbReference type="InterPro" id="IPR032319">
    <property type="entry name" value="CLP1_P"/>
</dbReference>
<dbReference type="InterPro" id="IPR027417">
    <property type="entry name" value="P-loop_NTPase"/>
</dbReference>
<dbReference type="PANTHER" id="PTHR12755">
    <property type="entry name" value="CLEAVAGE/POLYADENYLATION FACTOR IA SUBUNIT CLP1P"/>
    <property type="match status" value="1"/>
</dbReference>
<dbReference type="PANTHER" id="PTHR12755:SF6">
    <property type="entry name" value="POLYRIBONUCLEOTIDE 5'-HYDROXYL-KINASE CLP1"/>
    <property type="match status" value="1"/>
</dbReference>
<dbReference type="Pfam" id="PF06807">
    <property type="entry name" value="Clp1"/>
    <property type="match status" value="1"/>
</dbReference>
<dbReference type="Pfam" id="PF16573">
    <property type="entry name" value="CLP1_N"/>
    <property type="match status" value="1"/>
</dbReference>
<dbReference type="Pfam" id="PF16575">
    <property type="entry name" value="CLP1_P"/>
    <property type="match status" value="1"/>
</dbReference>
<dbReference type="SUPFAM" id="SSF52540">
    <property type="entry name" value="P-loop containing nucleoside triphosphate hydrolases"/>
    <property type="match status" value="1"/>
</dbReference>
<evidence type="ECO:0000255" key="1">
    <source>
        <dbReference type="HAMAP-Rule" id="MF_03035"/>
    </source>
</evidence>
<evidence type="ECO:0000305" key="2"/>
<keyword id="KW-0067">ATP-binding</keyword>
<keyword id="KW-0507">mRNA processing</keyword>
<keyword id="KW-0547">Nucleotide-binding</keyword>
<keyword id="KW-0539">Nucleus</keyword>
<keyword id="KW-1185">Reference proteome</keyword>
<reference key="1">
    <citation type="journal article" date="2007" name="Proc. Natl. Acad. Sci. U.S.A.">
        <title>Independent sorting-out of thousands of duplicated gene pairs in two yeast species descended from a whole-genome duplication.</title>
        <authorList>
            <person name="Scannell D.R."/>
            <person name="Frank A.C."/>
            <person name="Conant G.C."/>
            <person name="Byrne K.P."/>
            <person name="Woolfit M."/>
            <person name="Wolfe K.H."/>
        </authorList>
    </citation>
    <scope>NUCLEOTIDE SEQUENCE [LARGE SCALE GENOMIC DNA]</scope>
    <source>
        <strain>ATCC 22028 / DSM 70294 / BCRC 21397 / CBS 2163 / NBRC 10782 / NRRL Y-8283 / UCD 57-17</strain>
    </source>
</reference>
<gene>
    <name evidence="1" type="primary">CLP1</name>
    <name type="ORF">Kpol_1013p14</name>
</gene>
<sequence>MSILPGIDSTPTTNELFEGTNEIHKLEIEKGYEWKVEVNAESKLVIEVKSGIAEIFGTELANDIEYSFYNNKFSILAVEDVSLEWRCPEIPEQKLMIGENKTAKYVYNLHFSLEKMRAASFDGPKVMIVGGSNTGKTALARTLCSYAIKYKSYQPMFINLNPEEGIFSVAGCLTATPISDILDVQSTIWGHSMTSGATMLHSKQPLVKTFGLEHIKENQDLYLATLKQLSEVVKLRLQNDVLVHRSGCIIDTPPISVMDDDLTELTTTFKEFNVNVVILLSDEQEDPLLTKLNDKLSTISSSFNLLRLPILSGVIERDDVFKRSLQRLAIREYFYGSPSVVLSPYTIGVDFEDITVWRPINFIENPEETSQLLPTQLLPVEVKPTTLQHALVAISYADRKANESNVQLAPTLGFGLITEVNDKRRKLRILLPVPGRLPDKAMILTAYRYLE</sequence>
<feature type="chain" id="PRO_0000375217" description="mRNA cleavage and polyadenylation factor CLP1">
    <location>
        <begin position="1"/>
        <end position="451"/>
    </location>
</feature>
<feature type="binding site" evidence="1">
    <location>
        <position position="33"/>
    </location>
    <ligand>
        <name>ATP</name>
        <dbReference type="ChEBI" id="CHEBI:30616"/>
    </ligand>
</feature>
<feature type="binding site" evidence="1">
    <location>
        <position position="72"/>
    </location>
    <ligand>
        <name>ATP</name>
        <dbReference type="ChEBI" id="CHEBI:30616"/>
    </ligand>
</feature>
<feature type="binding site" evidence="1">
    <location>
        <begin position="133"/>
        <end position="138"/>
    </location>
    <ligand>
        <name>ATP</name>
        <dbReference type="ChEBI" id="CHEBI:30616"/>
    </ligand>
</feature>
<proteinExistence type="inferred from homology"/>
<comment type="function">
    <text evidence="1">Required for endonucleolytic cleavage during polyadenylation-dependent pre-mRNA 3'-end formation.</text>
</comment>
<comment type="subunit">
    <text evidence="1">Component of a pre-mRNA cleavage factor complex. Interacts directly with PCF11.</text>
</comment>
<comment type="subcellular location">
    <subcellularLocation>
        <location evidence="1">Nucleus</location>
    </subcellularLocation>
</comment>
<comment type="similarity">
    <text evidence="1">Belongs to the Clp1 family. Clp1 subfamily.</text>
</comment>
<comment type="caution">
    <text evidence="2">May lack the polyribonucleotide 5'-hydroxyl-kinase and polynucleotide 5'-hydroxyl-kinase activities that are characteristic of the human ortholog.</text>
</comment>
<accession>A7TH62</accession>
<organism>
    <name type="scientific">Vanderwaltozyma polyspora (strain ATCC 22028 / DSM 70294 / BCRC 21397 / CBS 2163 / NBRC 10782 / NRRL Y-8283 / UCD 57-17)</name>
    <name type="common">Kluyveromyces polysporus</name>
    <dbReference type="NCBI Taxonomy" id="436907"/>
    <lineage>
        <taxon>Eukaryota</taxon>
        <taxon>Fungi</taxon>
        <taxon>Dikarya</taxon>
        <taxon>Ascomycota</taxon>
        <taxon>Saccharomycotina</taxon>
        <taxon>Saccharomycetes</taxon>
        <taxon>Saccharomycetales</taxon>
        <taxon>Saccharomycetaceae</taxon>
        <taxon>Vanderwaltozyma</taxon>
    </lineage>
</organism>
<name>CLP1_VANPO</name>
<protein>
    <recommendedName>
        <fullName evidence="1">mRNA cleavage and polyadenylation factor CLP1</fullName>
    </recommendedName>
</protein>